<name>COQ4_DROSI</name>
<gene>
    <name type="ORF">GD12405</name>
</gene>
<protein>
    <recommendedName>
        <fullName evidence="1">Ubiquinone biosynthesis protein COQ4 homolog, mitochondrial</fullName>
    </recommendedName>
    <alternativeName>
        <fullName>4-hydroxy-3-methoxy-5-polyprenylbenzoate decarboxylase</fullName>
        <ecNumber evidence="1">4.1.1.130</ecNumber>
    </alternativeName>
    <alternativeName>
        <fullName evidence="1">Coenzyme Q biosynthesis protein 4 homolog</fullName>
    </alternativeName>
</protein>
<evidence type="ECO:0000255" key="1">
    <source>
        <dbReference type="HAMAP-Rule" id="MF_03111"/>
    </source>
</evidence>
<evidence type="ECO:0000305" key="2"/>
<dbReference type="EC" id="4.1.1.130" evidence="1"/>
<dbReference type="EMBL" id="CM000363">
    <property type="protein sequence ID" value="EDX10850.1"/>
    <property type="status" value="ALT_INIT"/>
    <property type="molecule type" value="Genomic_DNA"/>
</dbReference>
<dbReference type="SMR" id="B4QNU8"/>
<dbReference type="STRING" id="7240.B4QNU8"/>
<dbReference type="EnsemblMetazoa" id="FBtr0354409">
    <property type="protein sequence ID" value="FBpp0318795"/>
    <property type="gene ID" value="FBgn0184137"/>
</dbReference>
<dbReference type="EnsemblMetazoa" id="XM_016169341.2">
    <property type="protein sequence ID" value="XP_016032290.1"/>
    <property type="gene ID" value="LOC6738458"/>
</dbReference>
<dbReference type="GeneID" id="6738458"/>
<dbReference type="OrthoDB" id="4249at2759"/>
<dbReference type="UniPathway" id="UPA00232"/>
<dbReference type="Proteomes" id="UP000000304">
    <property type="component" value="Chromosome 3L"/>
</dbReference>
<dbReference type="Bgee" id="FBgn0184137">
    <property type="expression patterns" value="Expressed in embryo and 3 other cell types or tissues"/>
</dbReference>
<dbReference type="GO" id="GO:0031314">
    <property type="term" value="C:extrinsic component of mitochondrial inner membrane"/>
    <property type="evidence" value="ECO:0007669"/>
    <property type="project" value="UniProtKB-UniRule"/>
</dbReference>
<dbReference type="GO" id="GO:0006744">
    <property type="term" value="P:ubiquinone biosynthetic process"/>
    <property type="evidence" value="ECO:0007669"/>
    <property type="project" value="UniProtKB-UniRule"/>
</dbReference>
<dbReference type="HAMAP" id="MF_03111">
    <property type="entry name" value="Coq4"/>
    <property type="match status" value="1"/>
</dbReference>
<dbReference type="InterPro" id="IPR007715">
    <property type="entry name" value="Coq4"/>
</dbReference>
<dbReference type="InterPro" id="IPR027540">
    <property type="entry name" value="Coq4_euk"/>
</dbReference>
<dbReference type="PANTHER" id="PTHR12922">
    <property type="entry name" value="UBIQUINONE BIOSYNTHESIS PROTEIN"/>
    <property type="match status" value="1"/>
</dbReference>
<dbReference type="PANTHER" id="PTHR12922:SF7">
    <property type="entry name" value="UBIQUINONE BIOSYNTHESIS PROTEIN COQ4 HOMOLOG, MITOCHONDRIAL"/>
    <property type="match status" value="1"/>
</dbReference>
<dbReference type="Pfam" id="PF05019">
    <property type="entry name" value="Coq4"/>
    <property type="match status" value="1"/>
</dbReference>
<reference key="1">
    <citation type="journal article" date="2007" name="Nature">
        <title>Evolution of genes and genomes on the Drosophila phylogeny.</title>
        <authorList>
            <consortium name="Drosophila 12 genomes consortium"/>
        </authorList>
    </citation>
    <scope>NUCLEOTIDE SEQUENCE [LARGE SCALE GENOMIC DNA]</scope>
</reference>
<proteinExistence type="inferred from homology"/>
<organism>
    <name type="scientific">Drosophila simulans</name>
    <name type="common">Fruit fly</name>
    <dbReference type="NCBI Taxonomy" id="7240"/>
    <lineage>
        <taxon>Eukaryota</taxon>
        <taxon>Metazoa</taxon>
        <taxon>Ecdysozoa</taxon>
        <taxon>Arthropoda</taxon>
        <taxon>Hexapoda</taxon>
        <taxon>Insecta</taxon>
        <taxon>Pterygota</taxon>
        <taxon>Neoptera</taxon>
        <taxon>Endopterygota</taxon>
        <taxon>Diptera</taxon>
        <taxon>Brachycera</taxon>
        <taxon>Muscomorpha</taxon>
        <taxon>Ephydroidea</taxon>
        <taxon>Drosophilidae</taxon>
        <taxon>Drosophila</taxon>
        <taxon>Sophophora</taxon>
    </lineage>
</organism>
<accession>B4QNU8</accession>
<feature type="transit peptide" description="Mitochondrion" evidence="1">
    <location>
        <begin position="1"/>
        <end position="25"/>
    </location>
</feature>
<feature type="chain" id="PRO_0000388068" description="Ubiquinone biosynthesis protein COQ4 homolog, mitochondrial">
    <location>
        <begin position="26"/>
        <end position="268"/>
    </location>
</feature>
<feature type="binding site" evidence="1">
    <location>
        <position position="171"/>
    </location>
    <ligand>
        <name>Zn(2+)</name>
        <dbReference type="ChEBI" id="CHEBI:29105"/>
    </ligand>
</feature>
<feature type="binding site" evidence="1">
    <location>
        <position position="172"/>
    </location>
    <ligand>
        <name>Zn(2+)</name>
        <dbReference type="ChEBI" id="CHEBI:29105"/>
    </ligand>
</feature>
<feature type="binding site" evidence="1">
    <location>
        <position position="175"/>
    </location>
    <ligand>
        <name>Zn(2+)</name>
        <dbReference type="ChEBI" id="CHEBI:29105"/>
    </ligand>
</feature>
<feature type="binding site" evidence="1">
    <location>
        <position position="187"/>
    </location>
    <ligand>
        <name>Zn(2+)</name>
        <dbReference type="ChEBI" id="CHEBI:29105"/>
    </ligand>
</feature>
<comment type="function">
    <text evidence="1">Lyase that catalyzes the C1-decarboxylation of 4-hydroxy-3-methoxy-5-(all-trans-polyprenyl)benzoic acid into 2-methoxy-6-(all-trans-polyprenyl)phenol during ubiquinone biosynthesis.</text>
</comment>
<comment type="catalytic activity">
    <reaction evidence="1">
        <text>a 4-hydroxy-3-methoxy-5-(all-trans-polyprenyl)benzoate + H(+) = a 2-methoxy-6-(all-trans-polyprenyl)phenol + CO2</text>
        <dbReference type="Rhea" id="RHEA:81179"/>
        <dbReference type="Rhea" id="RHEA-COMP:9551"/>
        <dbReference type="Rhea" id="RHEA-COMP:10931"/>
        <dbReference type="ChEBI" id="CHEBI:15378"/>
        <dbReference type="ChEBI" id="CHEBI:16526"/>
        <dbReference type="ChEBI" id="CHEBI:62731"/>
        <dbReference type="ChEBI" id="CHEBI:84443"/>
        <dbReference type="EC" id="4.1.1.130"/>
    </reaction>
</comment>
<comment type="cofactor">
    <cofactor evidence="1">
        <name>Zn(2+)</name>
        <dbReference type="ChEBI" id="CHEBI:29105"/>
    </cofactor>
</comment>
<comment type="pathway">
    <text evidence="1">Cofactor biosynthesis; ubiquinone biosynthesis.</text>
</comment>
<comment type="subunit">
    <text evidence="1">Component of a multi-subunit COQ enzyme complex.</text>
</comment>
<comment type="subcellular location">
    <subcellularLocation>
        <location evidence="1">Mitochondrion inner membrane</location>
        <topology evidence="1">Peripheral membrane protein</topology>
        <orientation evidence="1">Matrix side</orientation>
    </subcellularLocation>
</comment>
<comment type="similarity">
    <text evidence="1">Belongs to the COQ4 family.</text>
</comment>
<comment type="sequence caution" evidence="2">
    <conflict type="erroneous initiation">
        <sequence resource="EMBL-CDS" id="EDX10850"/>
    </conflict>
</comment>
<keyword id="KW-0456">Lyase</keyword>
<keyword id="KW-0472">Membrane</keyword>
<keyword id="KW-0479">Metal-binding</keyword>
<keyword id="KW-0496">Mitochondrion</keyword>
<keyword id="KW-0999">Mitochondrion inner membrane</keyword>
<keyword id="KW-1185">Reference proteome</keyword>
<keyword id="KW-0809">Transit peptide</keyword>
<keyword id="KW-0831">Ubiquinone biosynthesis</keyword>
<keyword id="KW-0862">Zinc</keyword>
<sequence>MMQRCLRLQKPLALRRGLHLAQVNSQAVATEAPEAEPLDAFERQYLKERIEISPFQRLFLGTGSSIAALLNPRRHDMIACLGETTGEDALWTILDTMQASEEGQRIMADKPRIHTSTIDFKYLETLPPDTFGAAYVKFLKDNQVTPDSRMAVRFLEDPKLAYLMTRYRECHDLIHTVLDMPTNMLGEVAVKWVEALNTGLPMCYGGAVFGAVRLRPKQRRAYLKHYLPWALENGKRAKPLMPVYWEKRWEQNIHELRSELGITVLNKA</sequence>